<protein>
    <recommendedName>
        <fullName>Uncharacterized Na(+)/H(+) antiporter C15A10.06</fullName>
    </recommendedName>
</protein>
<feature type="chain" id="PRO_0000317232" description="Uncharacterized Na(+)/H(+) antiporter C15A10.06">
    <location>
        <begin position="1"/>
        <end position="567"/>
    </location>
</feature>
<feature type="topological domain" description="Lumenal" evidence="1">
    <location>
        <begin position="1"/>
        <end position="31"/>
    </location>
</feature>
<feature type="transmembrane region" description="Helical" evidence="1">
    <location>
        <begin position="32"/>
        <end position="52"/>
    </location>
</feature>
<feature type="topological domain" description="Cytoplasmic" evidence="1">
    <location>
        <begin position="53"/>
        <end position="64"/>
    </location>
</feature>
<feature type="transmembrane region" description="Helical" evidence="1">
    <location>
        <begin position="65"/>
        <end position="85"/>
    </location>
</feature>
<feature type="topological domain" description="Lumenal" evidence="1">
    <location>
        <begin position="86"/>
        <end position="87"/>
    </location>
</feature>
<feature type="transmembrane region" description="Helical" evidence="1">
    <location>
        <begin position="88"/>
        <end position="108"/>
    </location>
</feature>
<feature type="topological domain" description="Cytoplasmic" evidence="1">
    <location>
        <begin position="109"/>
        <end position="128"/>
    </location>
</feature>
<feature type="transmembrane region" description="Helical" evidence="1">
    <location>
        <begin position="129"/>
        <end position="149"/>
    </location>
</feature>
<feature type="topological domain" description="Lumenal" evidence="1">
    <location>
        <begin position="150"/>
        <end position="159"/>
    </location>
</feature>
<feature type="transmembrane region" description="Helical" evidence="1">
    <location>
        <begin position="160"/>
        <end position="180"/>
    </location>
</feature>
<feature type="topological domain" description="Cytoplasmic" evidence="1">
    <location>
        <begin position="181"/>
        <end position="188"/>
    </location>
</feature>
<feature type="transmembrane region" description="Helical" evidence="1">
    <location>
        <begin position="189"/>
        <end position="209"/>
    </location>
</feature>
<feature type="topological domain" description="Lumenal" evidence="1">
    <location>
        <begin position="210"/>
        <end position="227"/>
    </location>
</feature>
<feature type="transmembrane region" description="Helical" evidence="1">
    <location>
        <begin position="228"/>
        <end position="248"/>
    </location>
</feature>
<feature type="topological domain" description="Cytoplasmic" evidence="1">
    <location>
        <begin position="249"/>
        <end position="277"/>
    </location>
</feature>
<feature type="transmembrane region" description="Helical" evidence="1">
    <location>
        <begin position="278"/>
        <end position="298"/>
    </location>
</feature>
<feature type="topological domain" description="Lumenal" evidence="1">
    <location>
        <begin position="299"/>
        <end position="315"/>
    </location>
</feature>
<feature type="transmembrane region" description="Helical" evidence="1">
    <location>
        <begin position="316"/>
        <end position="338"/>
    </location>
</feature>
<feature type="topological domain" description="Cytoplasmic" evidence="1">
    <location>
        <begin position="339"/>
        <end position="347"/>
    </location>
</feature>
<feature type="transmembrane region" description="Helical" evidence="1">
    <location>
        <begin position="348"/>
        <end position="366"/>
    </location>
</feature>
<feature type="topological domain" description="Lumenal" evidence="1">
    <location>
        <begin position="367"/>
        <end position="392"/>
    </location>
</feature>
<feature type="transmembrane region" description="Helical" evidence="1">
    <location>
        <begin position="393"/>
        <end position="413"/>
    </location>
</feature>
<feature type="topological domain" description="Cytoplasmic" evidence="1">
    <location>
        <begin position="414"/>
        <end position="424"/>
    </location>
</feature>
<feature type="transmembrane region" description="Helical" evidence="1">
    <location>
        <begin position="425"/>
        <end position="445"/>
    </location>
</feature>
<feature type="topological domain" description="Lumenal" evidence="1">
    <location>
        <begin position="446"/>
        <end position="567"/>
    </location>
</feature>
<feature type="modified residue" description="Phosphoserine" evidence="3">
    <location>
        <position position="515"/>
    </location>
</feature>
<name>YDO6_SCHPO</name>
<evidence type="ECO:0000255" key="1"/>
<evidence type="ECO:0000269" key="2">
    <source>
    </source>
</evidence>
<evidence type="ECO:0000269" key="3">
    <source>
    </source>
</evidence>
<evidence type="ECO:0000305" key="4"/>
<organism>
    <name type="scientific">Schizosaccharomyces pombe (strain 972 / ATCC 24843)</name>
    <name type="common">Fission yeast</name>
    <dbReference type="NCBI Taxonomy" id="284812"/>
    <lineage>
        <taxon>Eukaryota</taxon>
        <taxon>Fungi</taxon>
        <taxon>Dikarya</taxon>
        <taxon>Ascomycota</taxon>
        <taxon>Taphrinomycotina</taxon>
        <taxon>Schizosaccharomycetes</taxon>
        <taxon>Schizosaccharomycetales</taxon>
        <taxon>Schizosaccharomycetaceae</taxon>
        <taxon>Schizosaccharomyces</taxon>
    </lineage>
</organism>
<dbReference type="EMBL" id="CU329670">
    <property type="protein sequence ID" value="CAB10103.2"/>
    <property type="molecule type" value="Genomic_DNA"/>
</dbReference>
<dbReference type="PIR" id="T37706">
    <property type="entry name" value="T37706"/>
</dbReference>
<dbReference type="RefSeq" id="NP_594293.2">
    <property type="nucleotide sequence ID" value="NM_001019716.2"/>
</dbReference>
<dbReference type="SMR" id="O13726"/>
<dbReference type="BioGRID" id="279197">
    <property type="interactions" value="29"/>
</dbReference>
<dbReference type="FunCoup" id="O13726">
    <property type="interactions" value="290"/>
</dbReference>
<dbReference type="STRING" id="284812.O13726"/>
<dbReference type="iPTMnet" id="O13726"/>
<dbReference type="PaxDb" id="4896-SPAC15A10.06.1"/>
<dbReference type="EnsemblFungi" id="SPAC15A10.06.1">
    <property type="protein sequence ID" value="SPAC15A10.06.1:pep"/>
    <property type="gene ID" value="SPAC15A10.06"/>
</dbReference>
<dbReference type="KEGG" id="spo:2542747"/>
<dbReference type="PomBase" id="SPAC15A10.06"/>
<dbReference type="VEuPathDB" id="FungiDB:SPAC15A10.06"/>
<dbReference type="eggNOG" id="KOG1965">
    <property type="taxonomic scope" value="Eukaryota"/>
</dbReference>
<dbReference type="HOGENOM" id="CLU_005912_5_1_1"/>
<dbReference type="InParanoid" id="O13726"/>
<dbReference type="OMA" id="FTYVRRF"/>
<dbReference type="Reactome" id="R-SPO-425986">
    <property type="pathway name" value="Sodium/Proton exchangers"/>
</dbReference>
<dbReference type="PRO" id="PR:O13726"/>
<dbReference type="Proteomes" id="UP000002485">
    <property type="component" value="Chromosome I"/>
</dbReference>
<dbReference type="GO" id="GO:0005737">
    <property type="term" value="C:cytoplasm"/>
    <property type="evidence" value="ECO:0007005"/>
    <property type="project" value="PomBase"/>
</dbReference>
<dbReference type="GO" id="GO:0005769">
    <property type="term" value="C:early endosome"/>
    <property type="evidence" value="ECO:0000318"/>
    <property type="project" value="GO_Central"/>
</dbReference>
<dbReference type="GO" id="GO:0000329">
    <property type="term" value="C:fungal-type vacuole membrane"/>
    <property type="evidence" value="ECO:0000318"/>
    <property type="project" value="GO_Central"/>
</dbReference>
<dbReference type="GO" id="GO:0005794">
    <property type="term" value="C:Golgi apparatus"/>
    <property type="evidence" value="ECO:0007005"/>
    <property type="project" value="PomBase"/>
</dbReference>
<dbReference type="GO" id="GO:0000139">
    <property type="term" value="C:Golgi membrane"/>
    <property type="evidence" value="ECO:0007669"/>
    <property type="project" value="UniProtKB-SubCell"/>
</dbReference>
<dbReference type="GO" id="GO:0005770">
    <property type="term" value="C:late endosome"/>
    <property type="evidence" value="ECO:0000318"/>
    <property type="project" value="GO_Central"/>
</dbReference>
<dbReference type="GO" id="GO:0015386">
    <property type="term" value="F:potassium:proton antiporter activity"/>
    <property type="evidence" value="ECO:0000318"/>
    <property type="project" value="GO_Central"/>
</dbReference>
<dbReference type="GO" id="GO:0015385">
    <property type="term" value="F:sodium:proton antiporter activity"/>
    <property type="evidence" value="ECO:0000318"/>
    <property type="project" value="GO_Central"/>
</dbReference>
<dbReference type="GO" id="GO:0071805">
    <property type="term" value="P:potassium ion transmembrane transport"/>
    <property type="evidence" value="ECO:0000318"/>
    <property type="project" value="GO_Central"/>
</dbReference>
<dbReference type="GO" id="GO:1902600">
    <property type="term" value="P:proton transmembrane transport"/>
    <property type="evidence" value="ECO:0000305"/>
    <property type="project" value="PomBase"/>
</dbReference>
<dbReference type="GO" id="GO:0035725">
    <property type="term" value="P:sodium ion transmembrane transport"/>
    <property type="evidence" value="ECO:0000266"/>
    <property type="project" value="PomBase"/>
</dbReference>
<dbReference type="GO" id="GO:0007035">
    <property type="term" value="P:vacuolar acidification"/>
    <property type="evidence" value="ECO:0000318"/>
    <property type="project" value="GO_Central"/>
</dbReference>
<dbReference type="Gene3D" id="6.10.140.1330">
    <property type="match status" value="1"/>
</dbReference>
<dbReference type="InterPro" id="IPR018422">
    <property type="entry name" value="Cation/H_exchanger_CPA1"/>
</dbReference>
<dbReference type="InterPro" id="IPR006153">
    <property type="entry name" value="Cation/H_exchanger_TM"/>
</dbReference>
<dbReference type="InterPro" id="IPR004709">
    <property type="entry name" value="NaH_exchanger"/>
</dbReference>
<dbReference type="NCBIfam" id="TIGR00840">
    <property type="entry name" value="b_cpa1"/>
    <property type="match status" value="1"/>
</dbReference>
<dbReference type="PANTHER" id="PTHR10110">
    <property type="entry name" value="SODIUM/HYDROGEN EXCHANGER"/>
    <property type="match status" value="1"/>
</dbReference>
<dbReference type="PANTHER" id="PTHR10110:SF187">
    <property type="entry name" value="SODIUM_HYDROGEN EXCHANGER"/>
    <property type="match status" value="1"/>
</dbReference>
<dbReference type="Pfam" id="PF00999">
    <property type="entry name" value="Na_H_Exchanger"/>
    <property type="match status" value="1"/>
</dbReference>
<dbReference type="PRINTS" id="PR01084">
    <property type="entry name" value="NAHEXCHNGR"/>
</dbReference>
<gene>
    <name type="ORF">SPAC15A10.06</name>
</gene>
<reference key="1">
    <citation type="journal article" date="2002" name="Nature">
        <title>The genome sequence of Schizosaccharomyces pombe.</title>
        <authorList>
            <person name="Wood V."/>
            <person name="Gwilliam R."/>
            <person name="Rajandream M.A."/>
            <person name="Lyne M.H."/>
            <person name="Lyne R."/>
            <person name="Stewart A."/>
            <person name="Sgouros J.G."/>
            <person name="Peat N."/>
            <person name="Hayles J."/>
            <person name="Baker S.G."/>
            <person name="Basham D."/>
            <person name="Bowman S."/>
            <person name="Brooks K."/>
            <person name="Brown D."/>
            <person name="Brown S."/>
            <person name="Chillingworth T."/>
            <person name="Churcher C.M."/>
            <person name="Collins M."/>
            <person name="Connor R."/>
            <person name="Cronin A."/>
            <person name="Davis P."/>
            <person name="Feltwell T."/>
            <person name="Fraser A."/>
            <person name="Gentles S."/>
            <person name="Goble A."/>
            <person name="Hamlin N."/>
            <person name="Harris D.E."/>
            <person name="Hidalgo J."/>
            <person name="Hodgson G."/>
            <person name="Holroyd S."/>
            <person name="Hornsby T."/>
            <person name="Howarth S."/>
            <person name="Huckle E.J."/>
            <person name="Hunt S."/>
            <person name="Jagels K."/>
            <person name="James K.D."/>
            <person name="Jones L."/>
            <person name="Jones M."/>
            <person name="Leather S."/>
            <person name="McDonald S."/>
            <person name="McLean J."/>
            <person name="Mooney P."/>
            <person name="Moule S."/>
            <person name="Mungall K.L."/>
            <person name="Murphy L.D."/>
            <person name="Niblett D."/>
            <person name="Odell C."/>
            <person name="Oliver K."/>
            <person name="O'Neil S."/>
            <person name="Pearson D."/>
            <person name="Quail M.A."/>
            <person name="Rabbinowitsch E."/>
            <person name="Rutherford K.M."/>
            <person name="Rutter S."/>
            <person name="Saunders D."/>
            <person name="Seeger K."/>
            <person name="Sharp S."/>
            <person name="Skelton J."/>
            <person name="Simmonds M.N."/>
            <person name="Squares R."/>
            <person name="Squares S."/>
            <person name="Stevens K."/>
            <person name="Taylor K."/>
            <person name="Taylor R.G."/>
            <person name="Tivey A."/>
            <person name="Walsh S.V."/>
            <person name="Warren T."/>
            <person name="Whitehead S."/>
            <person name="Woodward J.R."/>
            <person name="Volckaert G."/>
            <person name="Aert R."/>
            <person name="Robben J."/>
            <person name="Grymonprez B."/>
            <person name="Weltjens I."/>
            <person name="Vanstreels E."/>
            <person name="Rieger M."/>
            <person name="Schaefer M."/>
            <person name="Mueller-Auer S."/>
            <person name="Gabel C."/>
            <person name="Fuchs M."/>
            <person name="Duesterhoeft A."/>
            <person name="Fritzc C."/>
            <person name="Holzer E."/>
            <person name="Moestl D."/>
            <person name="Hilbert H."/>
            <person name="Borzym K."/>
            <person name="Langer I."/>
            <person name="Beck A."/>
            <person name="Lehrach H."/>
            <person name="Reinhardt R."/>
            <person name="Pohl T.M."/>
            <person name="Eger P."/>
            <person name="Zimmermann W."/>
            <person name="Wedler H."/>
            <person name="Wambutt R."/>
            <person name="Purnelle B."/>
            <person name="Goffeau A."/>
            <person name="Cadieu E."/>
            <person name="Dreano S."/>
            <person name="Gloux S."/>
            <person name="Lelaure V."/>
            <person name="Mottier S."/>
            <person name="Galibert F."/>
            <person name="Aves S.J."/>
            <person name="Xiang Z."/>
            <person name="Hunt C."/>
            <person name="Moore K."/>
            <person name="Hurst S.M."/>
            <person name="Lucas M."/>
            <person name="Rochet M."/>
            <person name="Gaillardin C."/>
            <person name="Tallada V.A."/>
            <person name="Garzon A."/>
            <person name="Thode G."/>
            <person name="Daga R.R."/>
            <person name="Cruzado L."/>
            <person name="Jimenez J."/>
            <person name="Sanchez M."/>
            <person name="del Rey F."/>
            <person name="Benito J."/>
            <person name="Dominguez A."/>
            <person name="Revuelta J.L."/>
            <person name="Moreno S."/>
            <person name="Armstrong J."/>
            <person name="Forsburg S.L."/>
            <person name="Cerutti L."/>
            <person name="Lowe T."/>
            <person name="McCombie W.R."/>
            <person name="Paulsen I."/>
            <person name="Potashkin J."/>
            <person name="Shpakovski G.V."/>
            <person name="Ussery D."/>
            <person name="Barrell B.G."/>
            <person name="Nurse P."/>
        </authorList>
    </citation>
    <scope>NUCLEOTIDE SEQUENCE [LARGE SCALE GENOMIC DNA]</scope>
    <source>
        <strain>972 / ATCC 24843</strain>
    </source>
</reference>
<reference key="2">
    <citation type="journal article" date="2011" name="Science">
        <title>Comparative functional genomics of the fission yeasts.</title>
        <authorList>
            <person name="Rhind N."/>
            <person name="Chen Z."/>
            <person name="Yassour M."/>
            <person name="Thompson D.A."/>
            <person name="Haas B.J."/>
            <person name="Habib N."/>
            <person name="Wapinski I."/>
            <person name="Roy S."/>
            <person name="Lin M.F."/>
            <person name="Heiman D.I."/>
            <person name="Young S.K."/>
            <person name="Furuya K."/>
            <person name="Guo Y."/>
            <person name="Pidoux A."/>
            <person name="Chen H.M."/>
            <person name="Robbertse B."/>
            <person name="Goldberg J.M."/>
            <person name="Aoki K."/>
            <person name="Bayne E.H."/>
            <person name="Berlin A.M."/>
            <person name="Desjardins C.A."/>
            <person name="Dobbs E."/>
            <person name="Dukaj L."/>
            <person name="Fan L."/>
            <person name="FitzGerald M.G."/>
            <person name="French C."/>
            <person name="Gujja S."/>
            <person name="Hansen K."/>
            <person name="Keifenheim D."/>
            <person name="Levin J.Z."/>
            <person name="Mosher R.A."/>
            <person name="Mueller C.A."/>
            <person name="Pfiffner J."/>
            <person name="Priest M."/>
            <person name="Russ C."/>
            <person name="Smialowska A."/>
            <person name="Swoboda P."/>
            <person name="Sykes S.M."/>
            <person name="Vaughn M."/>
            <person name="Vengrova S."/>
            <person name="Yoder R."/>
            <person name="Zeng Q."/>
            <person name="Allshire R."/>
            <person name="Baulcombe D."/>
            <person name="Birren B.W."/>
            <person name="Brown W."/>
            <person name="Ekwall K."/>
            <person name="Kellis M."/>
            <person name="Leatherwood J."/>
            <person name="Levin H."/>
            <person name="Margalit H."/>
            <person name="Martienssen R."/>
            <person name="Nieduszynski C.A."/>
            <person name="Spatafora J.W."/>
            <person name="Friedman N."/>
            <person name="Dalgaard J.Z."/>
            <person name="Baumann P."/>
            <person name="Niki H."/>
            <person name="Regev A."/>
            <person name="Nusbaum C."/>
        </authorList>
    </citation>
    <scope>REVISION OF GENE MODEL</scope>
</reference>
<reference key="3">
    <citation type="journal article" date="2006" name="Nat. Biotechnol.">
        <title>ORFeome cloning and global analysis of protein localization in the fission yeast Schizosaccharomyces pombe.</title>
        <authorList>
            <person name="Matsuyama A."/>
            <person name="Arai R."/>
            <person name="Yashiroda Y."/>
            <person name="Shirai A."/>
            <person name="Kamata A."/>
            <person name="Sekido S."/>
            <person name="Kobayashi Y."/>
            <person name="Hashimoto A."/>
            <person name="Hamamoto M."/>
            <person name="Hiraoka Y."/>
            <person name="Horinouchi S."/>
            <person name="Yoshida M."/>
        </authorList>
    </citation>
    <scope>SUBCELLULAR LOCATION [LARGE SCALE ANALYSIS]</scope>
</reference>
<reference key="4">
    <citation type="journal article" date="2008" name="J. Proteome Res.">
        <title>Phosphoproteome analysis of fission yeast.</title>
        <authorList>
            <person name="Wilson-Grady J.T."/>
            <person name="Villen J."/>
            <person name="Gygi S.P."/>
        </authorList>
    </citation>
    <scope>PHOSPHORYLATION [LARGE SCALE ANALYSIS] AT SER-515</scope>
    <scope>IDENTIFICATION BY MASS SPECTROMETRY</scope>
</reference>
<comment type="subcellular location">
    <subcellularLocation>
        <location evidence="2">Golgi apparatus membrane</location>
        <topology evidence="2">Multi-pass membrane protein</topology>
    </subcellularLocation>
</comment>
<comment type="similarity">
    <text evidence="4">Belongs to the monovalent cation:proton antiporter 1 (CPA1) transporter (TC 2.A.36) family.</text>
</comment>
<keyword id="KW-0050">Antiport</keyword>
<keyword id="KW-0333">Golgi apparatus</keyword>
<keyword id="KW-0406">Ion transport</keyword>
<keyword id="KW-0472">Membrane</keyword>
<keyword id="KW-0597">Phosphoprotein</keyword>
<keyword id="KW-1185">Reference proteome</keyword>
<keyword id="KW-0915">Sodium</keyword>
<keyword id="KW-0739">Sodium transport</keyword>
<keyword id="KW-0812">Transmembrane</keyword>
<keyword id="KW-1133">Transmembrane helix</keyword>
<keyword id="KW-0813">Transport</keyword>
<sequence>MLDTILINVFRRDGDDDDDDGQDPALQELYSSWALFILLVLLIGALLTSYYVQSKKIRAIHETVISVFVGMVVGLIIRVSPGLIIQNMVSFHSTYFFNVLLPPIILNSGYELHQSNFFRNIGTILTFAFAGTFISAVTLGVLVYIFSFLNFENLSMTFVEALSMGATLSATDPVTVLAIFNSYKVDQKLYTIIFGESILNDAVAIVMFETLQQFQGKTLHFFTLFSGIGIFIITFFISLLIGVSIGLITALLLKYSYLRRYPSIESCIILLMAYTSYFFSNGCHMSGVVSLLFCGITLKHYAFFNMSYKAKLSTKYVFRVLAQLSENFIFIYLGMSLFTQVDLVYKPIFILITTVAVTASRYMNVFPLSNLLNKFHRQRNGNLIDHIPYSYQMMLFWAGLRGAVGVALAAGFEGENAQTLRATTLVVVVLTLIIFGGTTARMLEILHIETGVAADVDSDTEIGMLPWQQSPEFDLENSAMELSDASAEPVVVDQQFTTEHFDEGNIAPTLSKKVSSTFEQYQRAAGAFNQFFHSSRDDQAQWLTRFDEEVIKPVLLERDNLKNGTKK</sequence>
<accession>O13726</accession>
<proteinExistence type="evidence at protein level"/>